<proteinExistence type="inferred from homology"/>
<organism>
    <name type="scientific">Methylibium petroleiphilum (strain ATCC BAA-1232 / LMG 22953 / PM1)</name>
    <dbReference type="NCBI Taxonomy" id="420662"/>
    <lineage>
        <taxon>Bacteria</taxon>
        <taxon>Pseudomonadati</taxon>
        <taxon>Pseudomonadota</taxon>
        <taxon>Betaproteobacteria</taxon>
        <taxon>Burkholderiales</taxon>
        <taxon>Sphaerotilaceae</taxon>
        <taxon>Methylibium</taxon>
    </lineage>
</organism>
<sequence>MHDKILILDFGSQVTQLIARRVREAHVYCEIHPNDVSDEFIREFAPKGIILSGSHASTYEDHDLRAPQAVWELGVPVLGICYGMFTMVVQQGGEVEASAHREFGYAEVRAHGHTRLLQGIEDFSTPEGHGMLKVWMSHGDKVTKLPPGFKLMASTPSCPIAGMADESRGYYAVQFHPEVTHTVQGRALLERFVLEIAKAQPDWVMKDHVAEAVAAIRAQVGDEEVILGLSGGVDSSVAAALIHRAIGDRLTCVFVDHGLLRLNEGDMVMEMFAGKLHAKVVRVDAAELFMNELAGVADPEAKRKIIGRLFVDVFKAEAAKLKASGAGHRGATFLAQGTIYPDVIESGGAKTKKATTIKSHHNVGGLPEQLGLKLLEPLRDLFKDEVRELGVALGLPHDMVYRHPFPGPGLGVRILGEVKKDYADLLRRADAIFIEELRNTVDPASGKTWYELTSQAFAVFLPVKSVGVMGDGRTYDYVVALRAVQTSDFMTADWAELPYALLKRTSGRIINEVRGINRVTYDVSSKPPATIEWE</sequence>
<keyword id="KW-0067">ATP-binding</keyword>
<keyword id="KW-0315">Glutamine amidotransferase</keyword>
<keyword id="KW-0332">GMP biosynthesis</keyword>
<keyword id="KW-0436">Ligase</keyword>
<keyword id="KW-0547">Nucleotide-binding</keyword>
<keyword id="KW-0658">Purine biosynthesis</keyword>
<keyword id="KW-1185">Reference proteome</keyword>
<reference key="1">
    <citation type="journal article" date="2007" name="J. Bacteriol.">
        <title>Whole-genome analysis of the methyl tert-butyl ether-degrading beta-proteobacterium Methylibium petroleiphilum PM1.</title>
        <authorList>
            <person name="Kane S.R."/>
            <person name="Chakicherla A.Y."/>
            <person name="Chain P.S.G."/>
            <person name="Schmidt R."/>
            <person name="Shin M.W."/>
            <person name="Legler T.C."/>
            <person name="Scow K.M."/>
            <person name="Larimer F.W."/>
            <person name="Lucas S.M."/>
            <person name="Richardson P.M."/>
            <person name="Hristova K.R."/>
        </authorList>
    </citation>
    <scope>NUCLEOTIDE SEQUENCE [LARGE SCALE GENOMIC DNA]</scope>
    <source>
        <strain>ATCC BAA-1232 / LMG 22953 / PM1</strain>
    </source>
</reference>
<comment type="function">
    <text evidence="1">Catalyzes the synthesis of GMP from XMP.</text>
</comment>
<comment type="catalytic activity">
    <reaction evidence="1">
        <text>XMP + L-glutamine + ATP + H2O = GMP + L-glutamate + AMP + diphosphate + 2 H(+)</text>
        <dbReference type="Rhea" id="RHEA:11680"/>
        <dbReference type="ChEBI" id="CHEBI:15377"/>
        <dbReference type="ChEBI" id="CHEBI:15378"/>
        <dbReference type="ChEBI" id="CHEBI:29985"/>
        <dbReference type="ChEBI" id="CHEBI:30616"/>
        <dbReference type="ChEBI" id="CHEBI:33019"/>
        <dbReference type="ChEBI" id="CHEBI:57464"/>
        <dbReference type="ChEBI" id="CHEBI:58115"/>
        <dbReference type="ChEBI" id="CHEBI:58359"/>
        <dbReference type="ChEBI" id="CHEBI:456215"/>
        <dbReference type="EC" id="6.3.5.2"/>
    </reaction>
</comment>
<comment type="pathway">
    <text evidence="1">Purine metabolism; GMP biosynthesis; GMP from XMP (L-Gln route): step 1/1.</text>
</comment>
<comment type="subunit">
    <text evidence="1">Homodimer.</text>
</comment>
<evidence type="ECO:0000255" key="1">
    <source>
        <dbReference type="HAMAP-Rule" id="MF_00344"/>
    </source>
</evidence>
<feature type="chain" id="PRO_1000120336" description="GMP synthase [glutamine-hydrolyzing]">
    <location>
        <begin position="1"/>
        <end position="534"/>
    </location>
</feature>
<feature type="domain" description="Glutamine amidotransferase type-1" evidence="1">
    <location>
        <begin position="4"/>
        <end position="202"/>
    </location>
</feature>
<feature type="domain" description="GMPS ATP-PPase" evidence="1">
    <location>
        <begin position="203"/>
        <end position="402"/>
    </location>
</feature>
<feature type="active site" description="Nucleophile" evidence="1">
    <location>
        <position position="81"/>
    </location>
</feature>
<feature type="active site" evidence="1">
    <location>
        <position position="176"/>
    </location>
</feature>
<feature type="active site" evidence="1">
    <location>
        <position position="178"/>
    </location>
</feature>
<feature type="binding site" evidence="1">
    <location>
        <begin position="230"/>
        <end position="236"/>
    </location>
    <ligand>
        <name>ATP</name>
        <dbReference type="ChEBI" id="CHEBI:30616"/>
    </ligand>
</feature>
<dbReference type="EC" id="6.3.5.2" evidence="1"/>
<dbReference type="EMBL" id="CP000555">
    <property type="protein sequence ID" value="ABM94584.1"/>
    <property type="molecule type" value="Genomic_DNA"/>
</dbReference>
<dbReference type="RefSeq" id="WP_011829221.1">
    <property type="nucleotide sequence ID" value="NC_008825.1"/>
</dbReference>
<dbReference type="SMR" id="A2SG95"/>
<dbReference type="STRING" id="420662.Mpe_A1622"/>
<dbReference type="MEROPS" id="C26.957"/>
<dbReference type="KEGG" id="mpt:Mpe_A1622"/>
<dbReference type="eggNOG" id="COG0518">
    <property type="taxonomic scope" value="Bacteria"/>
</dbReference>
<dbReference type="eggNOG" id="COG0519">
    <property type="taxonomic scope" value="Bacteria"/>
</dbReference>
<dbReference type="HOGENOM" id="CLU_014340_0_5_4"/>
<dbReference type="UniPathway" id="UPA00189">
    <property type="reaction ID" value="UER00296"/>
</dbReference>
<dbReference type="Proteomes" id="UP000000366">
    <property type="component" value="Chromosome"/>
</dbReference>
<dbReference type="GO" id="GO:0005829">
    <property type="term" value="C:cytosol"/>
    <property type="evidence" value="ECO:0007669"/>
    <property type="project" value="TreeGrafter"/>
</dbReference>
<dbReference type="GO" id="GO:0005524">
    <property type="term" value="F:ATP binding"/>
    <property type="evidence" value="ECO:0007669"/>
    <property type="project" value="UniProtKB-UniRule"/>
</dbReference>
<dbReference type="GO" id="GO:0003921">
    <property type="term" value="F:GMP synthase activity"/>
    <property type="evidence" value="ECO:0007669"/>
    <property type="project" value="InterPro"/>
</dbReference>
<dbReference type="CDD" id="cd01742">
    <property type="entry name" value="GATase1_GMP_Synthase"/>
    <property type="match status" value="1"/>
</dbReference>
<dbReference type="CDD" id="cd01997">
    <property type="entry name" value="GMP_synthase_C"/>
    <property type="match status" value="1"/>
</dbReference>
<dbReference type="FunFam" id="3.30.300.10:FF:000002">
    <property type="entry name" value="GMP synthase [glutamine-hydrolyzing]"/>
    <property type="match status" value="1"/>
</dbReference>
<dbReference type="FunFam" id="3.40.50.620:FF:000001">
    <property type="entry name" value="GMP synthase [glutamine-hydrolyzing]"/>
    <property type="match status" value="1"/>
</dbReference>
<dbReference type="FunFam" id="3.40.50.880:FF:000001">
    <property type="entry name" value="GMP synthase [glutamine-hydrolyzing]"/>
    <property type="match status" value="1"/>
</dbReference>
<dbReference type="Gene3D" id="3.30.300.10">
    <property type="match status" value="1"/>
</dbReference>
<dbReference type="Gene3D" id="3.40.50.880">
    <property type="match status" value="1"/>
</dbReference>
<dbReference type="Gene3D" id="3.40.50.620">
    <property type="entry name" value="HUPs"/>
    <property type="match status" value="1"/>
</dbReference>
<dbReference type="HAMAP" id="MF_00344">
    <property type="entry name" value="GMP_synthase"/>
    <property type="match status" value="1"/>
</dbReference>
<dbReference type="InterPro" id="IPR029062">
    <property type="entry name" value="Class_I_gatase-like"/>
</dbReference>
<dbReference type="InterPro" id="IPR017926">
    <property type="entry name" value="GATASE"/>
</dbReference>
<dbReference type="InterPro" id="IPR001674">
    <property type="entry name" value="GMP_synth_C"/>
</dbReference>
<dbReference type="InterPro" id="IPR004739">
    <property type="entry name" value="GMP_synth_GATase"/>
</dbReference>
<dbReference type="InterPro" id="IPR022955">
    <property type="entry name" value="GMP_synthase"/>
</dbReference>
<dbReference type="InterPro" id="IPR025777">
    <property type="entry name" value="GMPS_ATP_PPase_dom"/>
</dbReference>
<dbReference type="InterPro" id="IPR022310">
    <property type="entry name" value="NAD/GMP_synthase"/>
</dbReference>
<dbReference type="InterPro" id="IPR014729">
    <property type="entry name" value="Rossmann-like_a/b/a_fold"/>
</dbReference>
<dbReference type="NCBIfam" id="TIGR00884">
    <property type="entry name" value="guaA_Cterm"/>
    <property type="match status" value="1"/>
</dbReference>
<dbReference type="NCBIfam" id="TIGR00888">
    <property type="entry name" value="guaA_Nterm"/>
    <property type="match status" value="1"/>
</dbReference>
<dbReference type="NCBIfam" id="NF000848">
    <property type="entry name" value="PRK00074.1"/>
    <property type="match status" value="1"/>
</dbReference>
<dbReference type="PANTHER" id="PTHR11922:SF2">
    <property type="entry name" value="GMP SYNTHASE [GLUTAMINE-HYDROLYZING]"/>
    <property type="match status" value="1"/>
</dbReference>
<dbReference type="PANTHER" id="PTHR11922">
    <property type="entry name" value="GMP SYNTHASE-RELATED"/>
    <property type="match status" value="1"/>
</dbReference>
<dbReference type="Pfam" id="PF00117">
    <property type="entry name" value="GATase"/>
    <property type="match status" value="1"/>
</dbReference>
<dbReference type="Pfam" id="PF00958">
    <property type="entry name" value="GMP_synt_C"/>
    <property type="match status" value="1"/>
</dbReference>
<dbReference type="Pfam" id="PF02540">
    <property type="entry name" value="NAD_synthase"/>
    <property type="match status" value="1"/>
</dbReference>
<dbReference type="SUPFAM" id="SSF52402">
    <property type="entry name" value="Adenine nucleotide alpha hydrolases-like"/>
    <property type="match status" value="1"/>
</dbReference>
<dbReference type="SUPFAM" id="SSF52317">
    <property type="entry name" value="Class I glutamine amidotransferase-like"/>
    <property type="match status" value="1"/>
</dbReference>
<dbReference type="SUPFAM" id="SSF54810">
    <property type="entry name" value="GMP synthetase C-terminal dimerisation domain"/>
    <property type="match status" value="1"/>
</dbReference>
<dbReference type="PROSITE" id="PS51273">
    <property type="entry name" value="GATASE_TYPE_1"/>
    <property type="match status" value="1"/>
</dbReference>
<dbReference type="PROSITE" id="PS51553">
    <property type="entry name" value="GMPS_ATP_PPASE"/>
    <property type="match status" value="1"/>
</dbReference>
<protein>
    <recommendedName>
        <fullName evidence="1">GMP synthase [glutamine-hydrolyzing]</fullName>
        <ecNumber evidence="1">6.3.5.2</ecNumber>
    </recommendedName>
    <alternativeName>
        <fullName evidence="1">GMP synthetase</fullName>
    </alternativeName>
    <alternativeName>
        <fullName evidence="1">Glutamine amidotransferase</fullName>
    </alternativeName>
</protein>
<accession>A2SG95</accession>
<name>GUAA_METPP</name>
<gene>
    <name evidence="1" type="primary">guaA</name>
    <name type="ordered locus">Mpe_A1622</name>
</gene>